<feature type="chain" id="PRO_0000455115" description="Cytosolic purine 5'-nucleotidase">
    <location>
        <begin position="1"/>
        <end position="560"/>
    </location>
</feature>
<feature type="region of interest" description="Disordered" evidence="5">
    <location>
        <begin position="541"/>
        <end position="560"/>
    </location>
</feature>
<feature type="region of interest" description="Required for tetramer assembly" evidence="1">
    <location>
        <begin position="548"/>
        <end position="560"/>
    </location>
</feature>
<feature type="compositionally biased region" description="Acidic residues" evidence="5">
    <location>
        <begin position="550"/>
        <end position="560"/>
    </location>
</feature>
<feature type="active site" description="Nucleophile" evidence="3">
    <location>
        <position position="52"/>
    </location>
</feature>
<feature type="active site" description="Proton donor" evidence="3">
    <location>
        <position position="54"/>
    </location>
</feature>
<feature type="binding site" evidence="1">
    <location>
        <position position="52"/>
    </location>
    <ligand>
        <name>IMP</name>
        <dbReference type="ChEBI" id="CHEBI:58053"/>
    </ligand>
</feature>
<feature type="binding site" evidence="4">
    <location>
        <position position="52"/>
    </location>
    <ligand>
        <name>Mg(2+)</name>
        <dbReference type="ChEBI" id="CHEBI:18420"/>
    </ligand>
</feature>
<feature type="binding site" evidence="1">
    <location>
        <position position="54"/>
    </location>
    <ligand>
        <name>IMP</name>
        <dbReference type="ChEBI" id="CHEBI:58053"/>
    </ligand>
</feature>
<feature type="binding site" evidence="4">
    <location>
        <position position="54"/>
    </location>
    <ligand>
        <name>Mg(2+)</name>
        <dbReference type="ChEBI" id="CHEBI:18420"/>
    </ligand>
</feature>
<feature type="binding site" evidence="1">
    <location>
        <position position="144"/>
    </location>
    <ligand>
        <name>ATP</name>
        <dbReference type="ChEBI" id="CHEBI:30616"/>
        <note>allosteric activator</note>
    </ligand>
</feature>
<feature type="binding site" evidence="1">
    <location>
        <position position="154"/>
    </location>
    <ligand>
        <name>ATP</name>
        <dbReference type="ChEBI" id="CHEBI:30616"/>
        <note>allosteric activator</note>
    </ligand>
</feature>
<feature type="binding site" evidence="1">
    <location>
        <position position="202"/>
    </location>
    <ligand>
        <name>IMP</name>
        <dbReference type="ChEBI" id="CHEBI:58053"/>
    </ligand>
</feature>
<feature type="binding site" evidence="1">
    <location>
        <position position="206"/>
    </location>
    <ligand>
        <name>IMP</name>
        <dbReference type="ChEBI" id="CHEBI:58053"/>
    </ligand>
</feature>
<feature type="binding site" evidence="1">
    <location>
        <position position="215"/>
    </location>
    <ligand>
        <name>IMP</name>
        <dbReference type="ChEBI" id="CHEBI:58053"/>
    </ligand>
</feature>
<feature type="binding site" evidence="1">
    <location>
        <position position="249"/>
    </location>
    <ligand>
        <name>IMP</name>
        <dbReference type="ChEBI" id="CHEBI:58053"/>
    </ligand>
</feature>
<feature type="binding site" evidence="1">
    <location>
        <position position="250"/>
    </location>
    <ligand>
        <name>IMP</name>
        <dbReference type="ChEBI" id="CHEBI:58053"/>
    </ligand>
</feature>
<feature type="binding site" evidence="1">
    <location>
        <position position="251"/>
    </location>
    <ligand>
        <name>IMP</name>
        <dbReference type="ChEBI" id="CHEBI:58053"/>
    </ligand>
</feature>
<feature type="binding site" evidence="1">
    <location>
        <position position="292"/>
    </location>
    <ligand>
        <name>IMP</name>
        <dbReference type="ChEBI" id="CHEBI:58053"/>
    </ligand>
</feature>
<feature type="binding site" evidence="4">
    <location>
        <position position="351"/>
    </location>
    <ligand>
        <name>Mg(2+)</name>
        <dbReference type="ChEBI" id="CHEBI:18420"/>
    </ligand>
</feature>
<feature type="binding site" evidence="1">
    <location>
        <position position="453"/>
    </location>
    <ligand>
        <name>ATP</name>
        <dbReference type="ChEBI" id="CHEBI:30616"/>
        <note>allosteric activator</note>
    </ligand>
</feature>
<feature type="binding site" evidence="1">
    <location>
        <position position="456"/>
    </location>
    <ligand>
        <name>ATP</name>
        <dbReference type="ChEBI" id="CHEBI:30616"/>
        <note>allosteric activator</note>
    </ligand>
</feature>
<feature type="modified residue" description="Phosphoserine" evidence="1">
    <location>
        <position position="418"/>
    </location>
</feature>
<feature type="modified residue" description="Phosphoserine" evidence="1">
    <location>
        <position position="502"/>
    </location>
</feature>
<feature type="modified residue" description="Phosphoserine" evidence="1">
    <location>
        <position position="511"/>
    </location>
</feature>
<feature type="modified residue" description="Phosphoserine" evidence="2">
    <location>
        <position position="527"/>
    </location>
</feature>
<organism>
    <name type="scientific">Rattus norvegicus</name>
    <name type="common">Rat</name>
    <dbReference type="NCBI Taxonomy" id="10116"/>
    <lineage>
        <taxon>Eukaryota</taxon>
        <taxon>Metazoa</taxon>
        <taxon>Chordata</taxon>
        <taxon>Craniata</taxon>
        <taxon>Vertebrata</taxon>
        <taxon>Euteleostomi</taxon>
        <taxon>Mammalia</taxon>
        <taxon>Eutheria</taxon>
        <taxon>Euarchontoglires</taxon>
        <taxon>Glires</taxon>
        <taxon>Rodentia</taxon>
        <taxon>Myomorpha</taxon>
        <taxon>Muroidea</taxon>
        <taxon>Muridae</taxon>
        <taxon>Murinae</taxon>
        <taxon>Rattus</taxon>
    </lineage>
</organism>
<dbReference type="EC" id="3.1.3.5" evidence="6"/>
<dbReference type="EC" id="3.1.3.99" evidence="6"/>
<dbReference type="EC" id="2.7.1.77" evidence="1"/>
<dbReference type="EMBL" id="AC097752">
    <property type="status" value="NOT_ANNOTATED_CDS"/>
    <property type="molecule type" value="Genomic_DNA"/>
</dbReference>
<dbReference type="EMBL" id="AC105488">
    <property type="status" value="NOT_ANNOTATED_CDS"/>
    <property type="molecule type" value="Genomic_DNA"/>
</dbReference>
<dbReference type="RefSeq" id="NP_001388640.1">
    <property type="nucleotide sequence ID" value="NM_001401711.1"/>
</dbReference>
<dbReference type="RefSeq" id="XP_006223828.1">
    <property type="nucleotide sequence ID" value="XM_006223766.3"/>
</dbReference>
<dbReference type="RefSeq" id="XP_006223830.1">
    <property type="nucleotide sequence ID" value="XM_006223768.3"/>
</dbReference>
<dbReference type="RefSeq" id="XP_006231646.1">
    <property type="nucleotide sequence ID" value="XM_006231584.3"/>
</dbReference>
<dbReference type="RefSeq" id="XP_006231648.1">
    <property type="nucleotide sequence ID" value="XM_006231586.3"/>
</dbReference>
<dbReference type="RefSeq" id="XP_038957357.1">
    <property type="nucleotide sequence ID" value="XM_039101429.2"/>
</dbReference>
<dbReference type="RefSeq" id="XP_038957358.1">
    <property type="nucleotide sequence ID" value="XM_039101430.2"/>
</dbReference>
<dbReference type="RefSeq" id="XP_063138838.1">
    <property type="nucleotide sequence ID" value="XM_063282768.1"/>
</dbReference>
<dbReference type="SMR" id="D3ZMY7"/>
<dbReference type="FunCoup" id="D3ZMY7">
    <property type="interactions" value="1750"/>
</dbReference>
<dbReference type="IntAct" id="D3ZMY7">
    <property type="interactions" value="1"/>
</dbReference>
<dbReference type="STRING" id="10116.ENSRNOP00000027351"/>
<dbReference type="PhosphoSitePlus" id="D3ZMY7"/>
<dbReference type="jPOST" id="D3ZMY7"/>
<dbReference type="PaxDb" id="10116-ENSRNOP00000027351"/>
<dbReference type="PeptideAtlas" id="D3ZMY7"/>
<dbReference type="GeneID" id="100363253"/>
<dbReference type="AGR" id="RGD:2323387"/>
<dbReference type="RGD" id="2323387">
    <property type="gene designation" value="Nt5c2"/>
</dbReference>
<dbReference type="eggNOG" id="KOG2469">
    <property type="taxonomic scope" value="Eukaryota"/>
</dbReference>
<dbReference type="HOGENOM" id="CLU_017845_3_0_1"/>
<dbReference type="InParanoid" id="D3ZMY7"/>
<dbReference type="OrthoDB" id="10252832at2759"/>
<dbReference type="TreeFam" id="TF315266"/>
<dbReference type="Reactome" id="R-RNO-2161541">
    <property type="pathway name" value="Abacavir metabolism"/>
</dbReference>
<dbReference type="Reactome" id="R-RNO-74259">
    <property type="pathway name" value="Purine catabolism"/>
</dbReference>
<dbReference type="Reactome" id="R-RNO-9755088">
    <property type="pathway name" value="Ribavirin ADME"/>
</dbReference>
<dbReference type="PRO" id="PR:D3ZMY7"/>
<dbReference type="Proteomes" id="UP000002494">
    <property type="component" value="Chromosome 1"/>
</dbReference>
<dbReference type="Bgee" id="ENSRNOG00000020179">
    <property type="expression patterns" value="Expressed in kidney and 19 other cell types or tissues"/>
</dbReference>
<dbReference type="GO" id="GO:0005737">
    <property type="term" value="C:cytoplasm"/>
    <property type="evidence" value="ECO:0000266"/>
    <property type="project" value="RGD"/>
</dbReference>
<dbReference type="GO" id="GO:0005829">
    <property type="term" value="C:cytosol"/>
    <property type="evidence" value="ECO:0000250"/>
    <property type="project" value="UniProtKB"/>
</dbReference>
<dbReference type="GO" id="GO:0008253">
    <property type="term" value="F:5'-nucleotidase activity"/>
    <property type="evidence" value="ECO:0000314"/>
    <property type="project" value="UniProtKB"/>
</dbReference>
<dbReference type="GO" id="GO:0005524">
    <property type="term" value="F:ATP binding"/>
    <property type="evidence" value="ECO:0000250"/>
    <property type="project" value="UniProtKB"/>
</dbReference>
<dbReference type="GO" id="GO:0050484">
    <property type="term" value="F:GMP 5'-nucleotidase activity"/>
    <property type="evidence" value="ECO:0000314"/>
    <property type="project" value="UniProtKB"/>
</dbReference>
<dbReference type="GO" id="GO:0042802">
    <property type="term" value="F:identical protein binding"/>
    <property type="evidence" value="ECO:0000250"/>
    <property type="project" value="UniProtKB"/>
</dbReference>
<dbReference type="GO" id="GO:0050483">
    <property type="term" value="F:IMP 5'-nucleotidase activity"/>
    <property type="evidence" value="ECO:0000314"/>
    <property type="project" value="UniProtKB"/>
</dbReference>
<dbReference type="GO" id="GO:0046872">
    <property type="term" value="F:metal ion binding"/>
    <property type="evidence" value="ECO:0007669"/>
    <property type="project" value="UniProtKB-KW"/>
</dbReference>
<dbReference type="GO" id="GO:0050146">
    <property type="term" value="F:nucleoside phosphotransferase activity"/>
    <property type="evidence" value="ECO:0000250"/>
    <property type="project" value="UniProtKB"/>
</dbReference>
<dbReference type="GO" id="GO:0061630">
    <property type="term" value="F:ubiquitin protein ligase activity"/>
    <property type="evidence" value="ECO:0000266"/>
    <property type="project" value="RGD"/>
</dbReference>
<dbReference type="GO" id="GO:0046085">
    <property type="term" value="P:adenosine metabolic process"/>
    <property type="evidence" value="ECO:0000314"/>
    <property type="project" value="RGD"/>
</dbReference>
<dbReference type="GO" id="GO:0000255">
    <property type="term" value="P:allantoin metabolic process"/>
    <property type="evidence" value="ECO:0000266"/>
    <property type="project" value="RGD"/>
</dbReference>
<dbReference type="GO" id="GO:0043605">
    <property type="term" value="P:amide catabolic process"/>
    <property type="evidence" value="ECO:0000266"/>
    <property type="project" value="RGD"/>
</dbReference>
<dbReference type="GO" id="GO:0046055">
    <property type="term" value="P:dGMP catabolic process"/>
    <property type="evidence" value="ECO:0000266"/>
    <property type="project" value="RGD"/>
</dbReference>
<dbReference type="GO" id="GO:0046054">
    <property type="term" value="P:dGMP metabolic process"/>
    <property type="evidence" value="ECO:0000314"/>
    <property type="project" value="UniProtKB"/>
</dbReference>
<dbReference type="GO" id="GO:0046038">
    <property type="term" value="P:GMP catabolic process"/>
    <property type="evidence" value="ECO:0000266"/>
    <property type="project" value="RGD"/>
</dbReference>
<dbReference type="GO" id="GO:0006202">
    <property type="term" value="P:GMP catabolic process to guanine"/>
    <property type="evidence" value="ECO:0000266"/>
    <property type="project" value="RGD"/>
</dbReference>
<dbReference type="GO" id="GO:0046037">
    <property type="term" value="P:GMP metabolic process"/>
    <property type="evidence" value="ECO:0000314"/>
    <property type="project" value="UniProtKB"/>
</dbReference>
<dbReference type="GO" id="GO:0006204">
    <property type="term" value="P:IMP catabolic process"/>
    <property type="evidence" value="ECO:0000266"/>
    <property type="project" value="RGD"/>
</dbReference>
<dbReference type="GO" id="GO:0046040">
    <property type="term" value="P:IMP metabolic process"/>
    <property type="evidence" value="ECO:0000314"/>
    <property type="project" value="UniProtKB"/>
</dbReference>
<dbReference type="GO" id="GO:0050689">
    <property type="term" value="P:negative regulation of defense response to virus by host"/>
    <property type="evidence" value="ECO:0000266"/>
    <property type="project" value="RGD"/>
</dbReference>
<dbReference type="GO" id="GO:0070936">
    <property type="term" value="P:protein K48-linked ubiquitination"/>
    <property type="evidence" value="ECO:0000266"/>
    <property type="project" value="RGD"/>
</dbReference>
<dbReference type="CDD" id="cd07522">
    <property type="entry name" value="HAD_cN-II"/>
    <property type="match status" value="1"/>
</dbReference>
<dbReference type="FunFam" id="3.40.50.1000:FF:000021">
    <property type="entry name" value="NT5C2 isoform 1"/>
    <property type="match status" value="1"/>
</dbReference>
<dbReference type="Gene3D" id="3.40.50.1000">
    <property type="entry name" value="HAD superfamily/HAD-like"/>
    <property type="match status" value="2"/>
</dbReference>
<dbReference type="InterPro" id="IPR036412">
    <property type="entry name" value="HAD-like_sf"/>
</dbReference>
<dbReference type="InterPro" id="IPR008380">
    <property type="entry name" value="HAD-SF_hydro_IG_5-nucl"/>
</dbReference>
<dbReference type="InterPro" id="IPR023214">
    <property type="entry name" value="HAD_sf"/>
</dbReference>
<dbReference type="InterPro" id="IPR016695">
    <property type="entry name" value="Pur_nucleotidase"/>
</dbReference>
<dbReference type="NCBIfam" id="TIGR02244">
    <property type="entry name" value="HAD-IG-Ncltidse"/>
    <property type="match status" value="1"/>
</dbReference>
<dbReference type="PANTHER" id="PTHR12103">
    <property type="entry name" value="5'-NUCLEOTIDASE DOMAIN-CONTAINING"/>
    <property type="match status" value="1"/>
</dbReference>
<dbReference type="PANTHER" id="PTHR12103:SF17">
    <property type="entry name" value="CYTOSOLIC PURINE 5'-NUCLEOTIDASE"/>
    <property type="match status" value="1"/>
</dbReference>
<dbReference type="Pfam" id="PF05761">
    <property type="entry name" value="5_nucleotid"/>
    <property type="match status" value="1"/>
</dbReference>
<dbReference type="PIRSF" id="PIRSF017434">
    <property type="entry name" value="Purine_5'-nucleotidase"/>
    <property type="match status" value="1"/>
</dbReference>
<dbReference type="SUPFAM" id="SSF56784">
    <property type="entry name" value="HAD-like"/>
    <property type="match status" value="1"/>
</dbReference>
<sequence length="560" mass="64866">MMTSWSDRLQNAADVPANMDKHALKKYRREAYHRVFVNRSLAMEKIKCFGFDMDYTLAVYKSPEYESLGFELTVERLVSIGYPQELLNFAYDSTFPTRGLVFDTLYGNLLKVDAYGNLLVCAHGFNFIRGPETREQYPNKFIQRDDTERFYILNTLFNLPETYLLACLVDFFTNCPRYTSCDTGFKDGDLFMSYRSMFQDVRDAVDWVHYKGSLKEKTVENLEKYVVKDGKLPLLLSRMKEVGKVFLATNSDYKYTDKIMTYLFDFPHGPKPGSSHRPWQSYFDLILVDARKPLFFGEGTVLRQVDTKTGKLKIGTYTGPLQHGIVYSGGSSDTICDLLGAKGKDILYIGDHIFGDILKSKKRQGWRTFLVIPELAQELHVWTDKSSLFEELQSLDIFLAELYKHLDSSSNERPDISSIQRRIKKVTHDMDMCYGMMGSLFRSGSRQTLFASQVMRYADLYAASFINLLYYPFSYLFRAAHVLMPHESTVEHTHVDINEMESPLATRNRTSVDFKDTDYKRHQLTRSISEIKPPNLFPLAPQEITHCHDEDDDEEEEEEE</sequence>
<proteinExistence type="evidence at protein level"/>
<gene>
    <name evidence="9" type="primary">Nt5c2</name>
</gene>
<reference key="1">
    <citation type="journal article" date="2004" name="Nature">
        <title>Genome sequence of the Brown Norway rat yields insights into mammalian evolution.</title>
        <authorList>
            <person name="Gibbs R.A."/>
            <person name="Weinstock G.M."/>
            <person name="Metzker M.L."/>
            <person name="Muzny D.M."/>
            <person name="Sodergren E.J."/>
            <person name="Scherer S."/>
            <person name="Scott G."/>
            <person name="Steffen D."/>
            <person name="Worley K.C."/>
            <person name="Burch P.E."/>
            <person name="Okwuonu G."/>
            <person name="Hines S."/>
            <person name="Lewis L."/>
            <person name="Deramo C."/>
            <person name="Delgado O."/>
            <person name="Dugan-Rocha S."/>
            <person name="Miner G."/>
            <person name="Morgan M."/>
            <person name="Hawes A."/>
            <person name="Gill R."/>
            <person name="Holt R.A."/>
            <person name="Adams M.D."/>
            <person name="Amanatides P.G."/>
            <person name="Baden-Tillson H."/>
            <person name="Barnstead M."/>
            <person name="Chin S."/>
            <person name="Evans C.A."/>
            <person name="Ferriera S."/>
            <person name="Fosler C."/>
            <person name="Glodek A."/>
            <person name="Gu Z."/>
            <person name="Jennings D."/>
            <person name="Kraft C.L."/>
            <person name="Nguyen T."/>
            <person name="Pfannkoch C.M."/>
            <person name="Sitter C."/>
            <person name="Sutton G.G."/>
            <person name="Venter J.C."/>
            <person name="Woodage T."/>
            <person name="Smith D."/>
            <person name="Lee H.-M."/>
            <person name="Gustafson E."/>
            <person name="Cahill P."/>
            <person name="Kana A."/>
            <person name="Doucette-Stamm L."/>
            <person name="Weinstock K."/>
            <person name="Fechtel K."/>
            <person name="Weiss R.B."/>
            <person name="Dunn D.M."/>
            <person name="Green E.D."/>
            <person name="Blakesley R.W."/>
            <person name="Bouffard G.G."/>
            <person name="De Jong P.J."/>
            <person name="Osoegawa K."/>
            <person name="Zhu B."/>
            <person name="Marra M."/>
            <person name="Schein J."/>
            <person name="Bosdet I."/>
            <person name="Fjell C."/>
            <person name="Jones S."/>
            <person name="Krzywinski M."/>
            <person name="Mathewson C."/>
            <person name="Siddiqui A."/>
            <person name="Wye N."/>
            <person name="McPherson J."/>
            <person name="Zhao S."/>
            <person name="Fraser C.M."/>
            <person name="Shetty J."/>
            <person name="Shatsman S."/>
            <person name="Geer K."/>
            <person name="Chen Y."/>
            <person name="Abramzon S."/>
            <person name="Nierman W.C."/>
            <person name="Havlak P.H."/>
            <person name="Chen R."/>
            <person name="Durbin K.J."/>
            <person name="Egan A."/>
            <person name="Ren Y."/>
            <person name="Song X.-Z."/>
            <person name="Li B."/>
            <person name="Liu Y."/>
            <person name="Qin X."/>
            <person name="Cawley S."/>
            <person name="Cooney A.J."/>
            <person name="D'Souza L.M."/>
            <person name="Martin K."/>
            <person name="Wu J.Q."/>
            <person name="Gonzalez-Garay M.L."/>
            <person name="Jackson A.R."/>
            <person name="Kalafus K.J."/>
            <person name="McLeod M.P."/>
            <person name="Milosavljevic A."/>
            <person name="Virk D."/>
            <person name="Volkov A."/>
            <person name="Wheeler D.A."/>
            <person name="Zhang Z."/>
            <person name="Bailey J.A."/>
            <person name="Eichler E.E."/>
            <person name="Tuzun E."/>
            <person name="Birney E."/>
            <person name="Mongin E."/>
            <person name="Ureta-Vidal A."/>
            <person name="Woodwark C."/>
            <person name="Zdobnov E."/>
            <person name="Bork P."/>
            <person name="Suyama M."/>
            <person name="Torrents D."/>
            <person name="Alexandersson M."/>
            <person name="Trask B.J."/>
            <person name="Young J.M."/>
            <person name="Huang H."/>
            <person name="Wang H."/>
            <person name="Xing H."/>
            <person name="Daniels S."/>
            <person name="Gietzen D."/>
            <person name="Schmidt J."/>
            <person name="Stevens K."/>
            <person name="Vitt U."/>
            <person name="Wingrove J."/>
            <person name="Camara F."/>
            <person name="Mar Alba M."/>
            <person name="Abril J.F."/>
            <person name="Guigo R."/>
            <person name="Smit A."/>
            <person name="Dubchak I."/>
            <person name="Rubin E.M."/>
            <person name="Couronne O."/>
            <person name="Poliakov A."/>
            <person name="Huebner N."/>
            <person name="Ganten D."/>
            <person name="Goesele C."/>
            <person name="Hummel O."/>
            <person name="Kreitler T."/>
            <person name="Lee Y.-A."/>
            <person name="Monti J."/>
            <person name="Schulz H."/>
            <person name="Zimdahl H."/>
            <person name="Himmelbauer H."/>
            <person name="Lehrach H."/>
            <person name="Jacob H.J."/>
            <person name="Bromberg S."/>
            <person name="Gullings-Handley J."/>
            <person name="Jensen-Seaman M.I."/>
            <person name="Kwitek A.E."/>
            <person name="Lazar J."/>
            <person name="Pasko D."/>
            <person name="Tonellato P.J."/>
            <person name="Twigger S."/>
            <person name="Ponting C.P."/>
            <person name="Duarte J.M."/>
            <person name="Rice S."/>
            <person name="Goodstadt L."/>
            <person name="Beatson S.A."/>
            <person name="Emes R.D."/>
            <person name="Winter E.E."/>
            <person name="Webber C."/>
            <person name="Brandt P."/>
            <person name="Nyakatura G."/>
            <person name="Adetobi M."/>
            <person name="Chiaromonte F."/>
            <person name="Elnitski L."/>
            <person name="Eswara P."/>
            <person name="Hardison R.C."/>
            <person name="Hou M."/>
            <person name="Kolbe D."/>
            <person name="Makova K."/>
            <person name="Miller W."/>
            <person name="Nekrutenko A."/>
            <person name="Riemer C."/>
            <person name="Schwartz S."/>
            <person name="Taylor J."/>
            <person name="Yang S."/>
            <person name="Zhang Y."/>
            <person name="Lindpaintner K."/>
            <person name="Andrews T.D."/>
            <person name="Caccamo M."/>
            <person name="Clamp M."/>
            <person name="Clarke L."/>
            <person name="Curwen V."/>
            <person name="Durbin R.M."/>
            <person name="Eyras E."/>
            <person name="Searle S.M."/>
            <person name="Cooper G.M."/>
            <person name="Batzoglou S."/>
            <person name="Brudno M."/>
            <person name="Sidow A."/>
            <person name="Stone E.A."/>
            <person name="Payseur B.A."/>
            <person name="Bourque G."/>
            <person name="Lopez-Otin C."/>
            <person name="Puente X.S."/>
            <person name="Chakrabarti K."/>
            <person name="Chatterji S."/>
            <person name="Dewey C."/>
            <person name="Pachter L."/>
            <person name="Bray N."/>
            <person name="Yap V.B."/>
            <person name="Caspi A."/>
            <person name="Tesler G."/>
            <person name="Pevzner P.A."/>
            <person name="Haussler D."/>
            <person name="Roskin K.M."/>
            <person name="Baertsch R."/>
            <person name="Clawson H."/>
            <person name="Furey T.S."/>
            <person name="Hinrichs A.S."/>
            <person name="Karolchik D."/>
            <person name="Kent W.J."/>
            <person name="Rosenbloom K.R."/>
            <person name="Trumbower H."/>
            <person name="Weirauch M."/>
            <person name="Cooper D.N."/>
            <person name="Stenson P.D."/>
            <person name="Ma B."/>
            <person name="Brent M."/>
            <person name="Arumugam M."/>
            <person name="Shteynberg D."/>
            <person name="Copley R.R."/>
            <person name="Taylor M.S."/>
            <person name="Riethman H."/>
            <person name="Mudunuri U."/>
            <person name="Peterson J."/>
            <person name="Guyer M."/>
            <person name="Felsenfeld A."/>
            <person name="Old S."/>
            <person name="Mockrin S."/>
            <person name="Collins F.S."/>
        </authorList>
    </citation>
    <scope>NUCLEOTIDE SEQUENCE [LARGE SCALE GENOMIC DNA]</scope>
    <source>
        <strain>Brown Norway</strain>
    </source>
</reference>
<reference key="2">
    <citation type="journal article" date="1981" name="Biochim. Biophys. Acta">
        <title>Purification and some properties of cytosol 5'-nucleotidase from rat liver.</title>
        <authorList>
            <person name="Itoh R."/>
        </authorList>
    </citation>
    <scope>IDENTIFICATION</scope>
    <scope>FUNCTION</scope>
    <scope>CATALYTIC ACTIVITY</scope>
    <scope>COFACTOR</scope>
    <scope>SUBSTRATE SPECIFICITY</scope>
    <scope>ACTIVITY REGULATION</scope>
    <scope>BIOPHYSICOCHEMICAL PROPERTIES</scope>
</reference>
<protein>
    <recommendedName>
        <fullName evidence="8">Cytosolic purine 5'-nucleotidase</fullName>
        <ecNumber evidence="6">3.1.3.5</ecNumber>
        <ecNumber evidence="6">3.1.3.99</ecNumber>
    </recommendedName>
    <alternativeName>
        <fullName evidence="1">Cytosolic nucleoside phosphotransferase 5'N</fullName>
        <ecNumber evidence="1">2.7.1.77</ecNumber>
    </alternativeName>
</protein>
<evidence type="ECO:0000250" key="1">
    <source>
        <dbReference type="UniProtKB" id="P49902"/>
    </source>
</evidence>
<evidence type="ECO:0000250" key="2">
    <source>
        <dbReference type="UniProtKB" id="Q3V1L4"/>
    </source>
</evidence>
<evidence type="ECO:0000255" key="3">
    <source>
        <dbReference type="PIRSR" id="PIRSR017434-1"/>
    </source>
</evidence>
<evidence type="ECO:0000255" key="4">
    <source>
        <dbReference type="PIRSR" id="PIRSR017434-2"/>
    </source>
</evidence>
<evidence type="ECO:0000256" key="5">
    <source>
        <dbReference type="SAM" id="MobiDB-lite"/>
    </source>
</evidence>
<evidence type="ECO:0000269" key="6">
    <source>
    </source>
</evidence>
<evidence type="ECO:0000305" key="7"/>
<evidence type="ECO:0000305" key="8">
    <source>
    </source>
</evidence>
<evidence type="ECO:0000312" key="9">
    <source>
        <dbReference type="RGD" id="2323387"/>
    </source>
</evidence>
<keyword id="KW-0021">Allosteric enzyme</keyword>
<keyword id="KW-0067">ATP-binding</keyword>
<keyword id="KW-0963">Cytoplasm</keyword>
<keyword id="KW-0378">Hydrolase</keyword>
<keyword id="KW-0460">Magnesium</keyword>
<keyword id="KW-0479">Metal-binding</keyword>
<keyword id="KW-0546">Nucleotide metabolism</keyword>
<keyword id="KW-0547">Nucleotide-binding</keyword>
<keyword id="KW-0597">Phosphoprotein</keyword>
<keyword id="KW-1185">Reference proteome</keyword>
<keyword id="KW-0808">Transferase</keyword>
<comment type="function">
    <text evidence="1 6">Broad specificity cytosolic 5'-nucleotidase that catalyzes the dephosphorylation of 6-hydroxypurine nucleoside 5'-monophosphates (PubMed:6260203). In addition, possesses a phosphotransferase activity by which it can transfer a phosphate from a donor nucleoside monophosphate to an acceptor nucleoside, preferably inosine, deoxyinosine and guanosine (By similarity). Has the highest activities for IMP and GMP followed by dIMP, dGMP and XMP (PubMed:6260203). Could also catalyze the transfer of phosphates from pyrimidine monophosphates but with lower efficiency (By similarity). Through these activities regulates the purine nucleoside/nucleotide pools within the cell (PubMed:6260203).</text>
</comment>
<comment type="catalytic activity">
    <reaction evidence="6">
        <text>a ribonucleoside 5'-phosphate + H2O = a ribonucleoside + phosphate</text>
        <dbReference type="Rhea" id="RHEA:12484"/>
        <dbReference type="ChEBI" id="CHEBI:15377"/>
        <dbReference type="ChEBI" id="CHEBI:18254"/>
        <dbReference type="ChEBI" id="CHEBI:43474"/>
        <dbReference type="ChEBI" id="CHEBI:58043"/>
        <dbReference type="EC" id="3.1.3.5"/>
    </reaction>
    <physiologicalReaction direction="left-to-right" evidence="8">
        <dbReference type="Rhea" id="RHEA:12485"/>
    </physiologicalReaction>
</comment>
<comment type="catalytic activity">
    <reaction evidence="1">
        <text>a 2'-deoxyribonucleoside + a ribonucleoside 5'-phosphate = a ribonucleoside + a 2'-deoxyribonucleoside 5'-phosphate</text>
        <dbReference type="Rhea" id="RHEA:19961"/>
        <dbReference type="ChEBI" id="CHEBI:18254"/>
        <dbReference type="ChEBI" id="CHEBI:18274"/>
        <dbReference type="ChEBI" id="CHEBI:58043"/>
        <dbReference type="ChEBI" id="CHEBI:65317"/>
        <dbReference type="EC" id="2.7.1.77"/>
    </reaction>
</comment>
<comment type="catalytic activity">
    <reaction evidence="6">
        <text>IMP + H2O = inosine + phosphate</text>
        <dbReference type="Rhea" id="RHEA:27718"/>
        <dbReference type="ChEBI" id="CHEBI:15377"/>
        <dbReference type="ChEBI" id="CHEBI:17596"/>
        <dbReference type="ChEBI" id="CHEBI:43474"/>
        <dbReference type="ChEBI" id="CHEBI:58053"/>
        <dbReference type="EC" id="3.1.3.99"/>
    </reaction>
    <physiologicalReaction direction="left-to-right" evidence="8">
        <dbReference type="Rhea" id="RHEA:27719"/>
    </physiologicalReaction>
</comment>
<comment type="catalytic activity">
    <reaction evidence="6">
        <text>GMP + H2O = guanosine + phosphate</text>
        <dbReference type="Rhea" id="RHEA:27714"/>
        <dbReference type="ChEBI" id="CHEBI:15377"/>
        <dbReference type="ChEBI" id="CHEBI:16750"/>
        <dbReference type="ChEBI" id="CHEBI:43474"/>
        <dbReference type="ChEBI" id="CHEBI:58115"/>
    </reaction>
    <physiologicalReaction direction="left-to-right" evidence="8">
        <dbReference type="Rhea" id="RHEA:27715"/>
    </physiologicalReaction>
</comment>
<comment type="catalytic activity">
    <reaction evidence="6">
        <text>dIMP + H2O = 2'-deoxyinosine + phosphate</text>
        <dbReference type="Rhea" id="RHEA:29383"/>
        <dbReference type="ChEBI" id="CHEBI:15377"/>
        <dbReference type="ChEBI" id="CHEBI:28997"/>
        <dbReference type="ChEBI" id="CHEBI:43474"/>
        <dbReference type="ChEBI" id="CHEBI:61194"/>
    </reaction>
    <physiologicalReaction direction="left-to-right" evidence="8">
        <dbReference type="Rhea" id="RHEA:29384"/>
    </physiologicalReaction>
</comment>
<comment type="catalytic activity">
    <reaction evidence="6">
        <text>dGMP + H2O = 2'-deoxyguanosine + phosphate</text>
        <dbReference type="Rhea" id="RHEA:29379"/>
        <dbReference type="ChEBI" id="CHEBI:15377"/>
        <dbReference type="ChEBI" id="CHEBI:17172"/>
        <dbReference type="ChEBI" id="CHEBI:43474"/>
        <dbReference type="ChEBI" id="CHEBI:57673"/>
    </reaction>
    <physiologicalReaction direction="left-to-right" evidence="8">
        <dbReference type="Rhea" id="RHEA:29380"/>
    </physiologicalReaction>
</comment>
<comment type="catalytic activity">
    <reaction evidence="6">
        <text>XMP + H2O = xanthosine + phosphate</text>
        <dbReference type="Rhea" id="RHEA:28530"/>
        <dbReference type="ChEBI" id="CHEBI:15377"/>
        <dbReference type="ChEBI" id="CHEBI:18107"/>
        <dbReference type="ChEBI" id="CHEBI:43474"/>
        <dbReference type="ChEBI" id="CHEBI:57464"/>
    </reaction>
    <physiologicalReaction direction="left-to-right" evidence="8">
        <dbReference type="Rhea" id="RHEA:28531"/>
    </physiologicalReaction>
</comment>
<comment type="catalytic activity">
    <reaction evidence="1">
        <text>inosine + GMP = guanosine + IMP</text>
        <dbReference type="Rhea" id="RHEA:69584"/>
        <dbReference type="ChEBI" id="CHEBI:16750"/>
        <dbReference type="ChEBI" id="CHEBI:17596"/>
        <dbReference type="ChEBI" id="CHEBI:58053"/>
        <dbReference type="ChEBI" id="CHEBI:58115"/>
    </reaction>
</comment>
<comment type="catalytic activity">
    <reaction evidence="1">
        <text>dGMP + inosine = 2'-deoxyguanosine + IMP</text>
        <dbReference type="Rhea" id="RHEA:69580"/>
        <dbReference type="ChEBI" id="CHEBI:17172"/>
        <dbReference type="ChEBI" id="CHEBI:17596"/>
        <dbReference type="ChEBI" id="CHEBI:57673"/>
        <dbReference type="ChEBI" id="CHEBI:58053"/>
    </reaction>
</comment>
<comment type="catalytic activity">
    <reaction evidence="1">
        <text>dIMP + inosine = 2'-deoxyinosine + IMP</text>
        <dbReference type="Rhea" id="RHEA:69572"/>
        <dbReference type="ChEBI" id="CHEBI:17596"/>
        <dbReference type="ChEBI" id="CHEBI:28997"/>
        <dbReference type="ChEBI" id="CHEBI:58053"/>
        <dbReference type="ChEBI" id="CHEBI:61194"/>
    </reaction>
</comment>
<comment type="catalytic activity">
    <reaction evidence="1">
        <text>inosine + UMP = uridine + IMP</text>
        <dbReference type="Rhea" id="RHEA:69588"/>
        <dbReference type="ChEBI" id="CHEBI:16704"/>
        <dbReference type="ChEBI" id="CHEBI:17596"/>
        <dbReference type="ChEBI" id="CHEBI:57865"/>
        <dbReference type="ChEBI" id="CHEBI:58053"/>
    </reaction>
</comment>
<comment type="catalytic activity">
    <reaction evidence="1">
        <text>inosine + CMP = cytidine + IMP</text>
        <dbReference type="Rhea" id="RHEA:69592"/>
        <dbReference type="ChEBI" id="CHEBI:17562"/>
        <dbReference type="ChEBI" id="CHEBI:17596"/>
        <dbReference type="ChEBI" id="CHEBI:58053"/>
        <dbReference type="ChEBI" id="CHEBI:60377"/>
    </reaction>
</comment>
<comment type="catalytic activity">
    <reaction evidence="1">
        <text>inosine + AMP = IMP + adenosine</text>
        <dbReference type="Rhea" id="RHEA:69596"/>
        <dbReference type="ChEBI" id="CHEBI:16335"/>
        <dbReference type="ChEBI" id="CHEBI:17596"/>
        <dbReference type="ChEBI" id="CHEBI:58053"/>
        <dbReference type="ChEBI" id="CHEBI:456215"/>
    </reaction>
</comment>
<comment type="cofactor">
    <cofactor evidence="6">
        <name>Mg(2+)</name>
        <dbReference type="ChEBI" id="CHEBI:18420"/>
    </cofactor>
    <text evidence="1">Binds 1 Mg(2+) ion per subunit.</text>
</comment>
<comment type="activity regulation">
    <text evidence="1 6">Allosterically activated by various compounds including ATP, 2,3-BPG/2,3-Bisphosphoglyceric acid and Ap4A/P1,P4-bis(5'-adenosyl) tetraphosphate (PubMed:6260203). Binding of an allosteric activator is a prerequisiste to magnesium and substrate binding (By similarity). Inhibited by inorganic phosphate (PubMed:6260203).</text>
</comment>
<comment type="biophysicochemical properties">
    <kinetics>
        <KM evidence="6">0.2 mM for IMP</KM>
        <KM evidence="6">0.7 mM for dIMP</KM>
        <KM evidence="6">0.7 mM for GMP</KM>
        <KM evidence="6">1.1 mM for dGMP</KM>
    </kinetics>
    <phDependence>
        <text evidence="6">Optimum pH is 6.5.</text>
    </phDependence>
</comment>
<comment type="subunit">
    <text evidence="1">Homotetramer.</text>
</comment>
<comment type="subcellular location">
    <subcellularLocation>
        <location evidence="1">Cytoplasm</location>
        <location evidence="1">Cytosol</location>
    </subcellularLocation>
</comment>
<comment type="similarity">
    <text evidence="7">Belongs to the 5'(3')-deoxyribonucleotidase family.</text>
</comment>
<name>5NTC_RAT</name>
<accession>D3ZMY7</accession>